<sequence length="226" mass="25804">MTLLILLRHGQSVWNQKNLFTGWVDIPLSQQGIQEAIAAGESIKHLPIDCIFTSTLVRSLMTALLAMTNHSSQKVPYIVHEERPDMSRIHSQKEMEQMIPLFQSSALNERMYGELQGKNKQEVAAQFGEEQVKLWRRSYRIAPPQGESLFDTGQRTLPYFQERIFPLLQQGKNIFISAHGNSLRSLIMDLEKLSEEQVLSLELPTGQPIVYEWTGQKFTKHAPSLG</sequence>
<evidence type="ECO:0000255" key="1">
    <source>
        <dbReference type="HAMAP-Rule" id="MF_01039"/>
    </source>
</evidence>
<name>GPMA_CHLTB</name>
<protein>
    <recommendedName>
        <fullName evidence="1">2,3-bisphosphoglycerate-dependent phosphoglycerate mutase</fullName>
        <shortName evidence="1">BPG-dependent PGAM</shortName>
        <shortName evidence="1">PGAM</shortName>
        <shortName evidence="1">Phosphoglyceromutase</shortName>
        <shortName evidence="1">dPGM</shortName>
        <ecNumber evidence="1">5.4.2.11</ecNumber>
    </recommendedName>
</protein>
<reference key="1">
    <citation type="journal article" date="2008" name="Genome Res.">
        <title>Chlamydia trachomatis: genome sequence analysis of lymphogranuloma venereum isolates.</title>
        <authorList>
            <person name="Thomson N.R."/>
            <person name="Holden M.T.G."/>
            <person name="Carder C."/>
            <person name="Lennard N."/>
            <person name="Lockey S.J."/>
            <person name="Marsh P."/>
            <person name="Skipp P."/>
            <person name="O'Connor C.D."/>
            <person name="Goodhead I."/>
            <person name="Norbertzcak H."/>
            <person name="Harris B."/>
            <person name="Ormond D."/>
            <person name="Rance R."/>
            <person name="Quail M.A."/>
            <person name="Parkhill J."/>
            <person name="Stephens R.S."/>
            <person name="Clarke I.N."/>
        </authorList>
    </citation>
    <scope>NUCLEOTIDE SEQUENCE [LARGE SCALE GENOMIC DNA]</scope>
    <source>
        <strain>UCH-1/proctitis</strain>
    </source>
</reference>
<comment type="function">
    <text evidence="1">Catalyzes the interconversion of 2-phosphoglycerate and 3-phosphoglycerate.</text>
</comment>
<comment type="catalytic activity">
    <reaction evidence="1">
        <text>(2R)-2-phosphoglycerate = (2R)-3-phosphoglycerate</text>
        <dbReference type="Rhea" id="RHEA:15901"/>
        <dbReference type="ChEBI" id="CHEBI:58272"/>
        <dbReference type="ChEBI" id="CHEBI:58289"/>
        <dbReference type="EC" id="5.4.2.11"/>
    </reaction>
</comment>
<comment type="pathway">
    <text evidence="1">Carbohydrate degradation; glycolysis; pyruvate from D-glyceraldehyde 3-phosphate: step 3/5.</text>
</comment>
<comment type="similarity">
    <text evidence="1">Belongs to the phosphoglycerate mutase family. BPG-dependent PGAM subfamily.</text>
</comment>
<organism>
    <name type="scientific">Chlamydia trachomatis serovar L2b (strain UCH-1/proctitis)</name>
    <dbReference type="NCBI Taxonomy" id="471473"/>
    <lineage>
        <taxon>Bacteria</taxon>
        <taxon>Pseudomonadati</taxon>
        <taxon>Chlamydiota</taxon>
        <taxon>Chlamydiia</taxon>
        <taxon>Chlamydiales</taxon>
        <taxon>Chlamydiaceae</taxon>
        <taxon>Chlamydia/Chlamydophila group</taxon>
        <taxon>Chlamydia</taxon>
    </lineage>
</organism>
<dbReference type="EC" id="5.4.2.11" evidence="1"/>
<dbReference type="EMBL" id="AM884177">
    <property type="protein sequence ID" value="CAP06489.1"/>
    <property type="molecule type" value="Genomic_DNA"/>
</dbReference>
<dbReference type="RefSeq" id="WP_012263548.1">
    <property type="nucleotide sequence ID" value="NC_010280.2"/>
</dbReference>
<dbReference type="SMR" id="B0BAH7"/>
<dbReference type="KEGG" id="ctl:CTLon_0091"/>
<dbReference type="HOGENOM" id="CLU_033323_1_4_0"/>
<dbReference type="UniPathway" id="UPA00109">
    <property type="reaction ID" value="UER00186"/>
</dbReference>
<dbReference type="Proteomes" id="UP001154401">
    <property type="component" value="Chromosome"/>
</dbReference>
<dbReference type="GO" id="GO:0004619">
    <property type="term" value="F:phosphoglycerate mutase activity"/>
    <property type="evidence" value="ECO:0007669"/>
    <property type="project" value="UniProtKB-EC"/>
</dbReference>
<dbReference type="GO" id="GO:0006094">
    <property type="term" value="P:gluconeogenesis"/>
    <property type="evidence" value="ECO:0007669"/>
    <property type="project" value="UniProtKB-UniRule"/>
</dbReference>
<dbReference type="GO" id="GO:0006096">
    <property type="term" value="P:glycolytic process"/>
    <property type="evidence" value="ECO:0007669"/>
    <property type="project" value="UniProtKB-UniRule"/>
</dbReference>
<dbReference type="CDD" id="cd07067">
    <property type="entry name" value="HP_PGM_like"/>
    <property type="match status" value="1"/>
</dbReference>
<dbReference type="Gene3D" id="3.40.50.1240">
    <property type="entry name" value="Phosphoglycerate mutase-like"/>
    <property type="match status" value="1"/>
</dbReference>
<dbReference type="HAMAP" id="MF_01039">
    <property type="entry name" value="PGAM_GpmA"/>
    <property type="match status" value="1"/>
</dbReference>
<dbReference type="InterPro" id="IPR013078">
    <property type="entry name" value="His_Pase_superF_clade-1"/>
</dbReference>
<dbReference type="InterPro" id="IPR029033">
    <property type="entry name" value="His_PPase_superfam"/>
</dbReference>
<dbReference type="InterPro" id="IPR001345">
    <property type="entry name" value="PG/BPGM_mutase_AS"/>
</dbReference>
<dbReference type="InterPro" id="IPR005952">
    <property type="entry name" value="Phosphogly_mut1"/>
</dbReference>
<dbReference type="NCBIfam" id="NF002217">
    <property type="entry name" value="PRK01112.1"/>
    <property type="match status" value="1"/>
</dbReference>
<dbReference type="PANTHER" id="PTHR11931">
    <property type="entry name" value="PHOSPHOGLYCERATE MUTASE"/>
    <property type="match status" value="1"/>
</dbReference>
<dbReference type="Pfam" id="PF00300">
    <property type="entry name" value="His_Phos_1"/>
    <property type="match status" value="2"/>
</dbReference>
<dbReference type="PIRSF" id="PIRSF000709">
    <property type="entry name" value="6PFK_2-Ptase"/>
    <property type="match status" value="1"/>
</dbReference>
<dbReference type="SMART" id="SM00855">
    <property type="entry name" value="PGAM"/>
    <property type="match status" value="1"/>
</dbReference>
<dbReference type="SUPFAM" id="SSF53254">
    <property type="entry name" value="Phosphoglycerate mutase-like"/>
    <property type="match status" value="1"/>
</dbReference>
<dbReference type="PROSITE" id="PS00175">
    <property type="entry name" value="PG_MUTASE"/>
    <property type="match status" value="1"/>
</dbReference>
<accession>B0BAH7</accession>
<keyword id="KW-0312">Gluconeogenesis</keyword>
<keyword id="KW-0324">Glycolysis</keyword>
<keyword id="KW-0413">Isomerase</keyword>
<proteinExistence type="inferred from homology"/>
<gene>
    <name evidence="1" type="primary">gpmA</name>
    <name type="ordered locus">CTLon_0091</name>
</gene>
<feature type="chain" id="PRO_1000135937" description="2,3-bisphosphoglycerate-dependent phosphoglycerate mutase">
    <location>
        <begin position="1"/>
        <end position="226"/>
    </location>
</feature>
<feature type="active site" description="Tele-phosphohistidine intermediate" evidence="1">
    <location>
        <position position="9"/>
    </location>
</feature>
<feature type="active site" description="Proton donor/acceptor" evidence="1">
    <location>
        <position position="109"/>
    </location>
</feature>
<feature type="binding site" evidence="1">
    <location>
        <begin position="8"/>
        <end position="15"/>
    </location>
    <ligand>
        <name>substrate</name>
    </ligand>
</feature>
<feature type="binding site" evidence="1">
    <location>
        <begin position="21"/>
        <end position="22"/>
    </location>
    <ligand>
        <name>substrate</name>
    </ligand>
</feature>
<feature type="binding site" evidence="1">
    <location>
        <position position="58"/>
    </location>
    <ligand>
        <name>substrate</name>
    </ligand>
</feature>
<feature type="binding site" evidence="1">
    <location>
        <begin position="109"/>
        <end position="112"/>
    </location>
    <ligand>
        <name>substrate</name>
    </ligand>
</feature>
<feature type="binding site" evidence="1">
    <location>
        <position position="120"/>
    </location>
    <ligand>
        <name>substrate</name>
    </ligand>
</feature>
<feature type="binding site" evidence="1">
    <location>
        <begin position="136"/>
        <end position="137"/>
    </location>
    <ligand>
        <name>substrate</name>
    </ligand>
</feature>
<feature type="binding site" evidence="1">
    <location>
        <begin position="180"/>
        <end position="181"/>
    </location>
    <ligand>
        <name>substrate</name>
    </ligand>
</feature>
<feature type="site" description="Transition state stabilizer" evidence="1">
    <location>
        <position position="179"/>
    </location>
</feature>